<reference key="1">
    <citation type="journal article" date="2003" name="DNA Res.">
        <title>Prediction of the coding sequences of mouse homologues of KIAA gene: III. The complete nucleotide sequences of 500 mouse KIAA-homologous cDNAs identified by screening of terminal sequences of cDNA clones randomly sampled from size-fractionated libraries.</title>
        <authorList>
            <person name="Okazaki N."/>
            <person name="Kikuno R."/>
            <person name="Ohara R."/>
            <person name="Inamoto S."/>
            <person name="Koseki H."/>
            <person name="Hiraoka S."/>
            <person name="Saga Y."/>
            <person name="Nagase T."/>
            <person name="Ohara O."/>
            <person name="Koga H."/>
        </authorList>
    </citation>
    <scope>NUCLEOTIDE SEQUENCE [LARGE SCALE MRNA] (ISOFORM 1)</scope>
</reference>
<reference key="2">
    <citation type="journal article" date="2005" name="Science">
        <title>The transcriptional landscape of the mammalian genome.</title>
        <authorList>
            <person name="Carninci P."/>
            <person name="Kasukawa T."/>
            <person name="Katayama S."/>
            <person name="Gough J."/>
            <person name="Frith M.C."/>
            <person name="Maeda N."/>
            <person name="Oyama R."/>
            <person name="Ravasi T."/>
            <person name="Lenhard B."/>
            <person name="Wells C."/>
            <person name="Kodzius R."/>
            <person name="Shimokawa K."/>
            <person name="Bajic V.B."/>
            <person name="Brenner S.E."/>
            <person name="Batalov S."/>
            <person name="Forrest A.R."/>
            <person name="Zavolan M."/>
            <person name="Davis M.J."/>
            <person name="Wilming L.G."/>
            <person name="Aidinis V."/>
            <person name="Allen J.E."/>
            <person name="Ambesi-Impiombato A."/>
            <person name="Apweiler R."/>
            <person name="Aturaliya R.N."/>
            <person name="Bailey T.L."/>
            <person name="Bansal M."/>
            <person name="Baxter L."/>
            <person name="Beisel K.W."/>
            <person name="Bersano T."/>
            <person name="Bono H."/>
            <person name="Chalk A.M."/>
            <person name="Chiu K.P."/>
            <person name="Choudhary V."/>
            <person name="Christoffels A."/>
            <person name="Clutterbuck D.R."/>
            <person name="Crowe M.L."/>
            <person name="Dalla E."/>
            <person name="Dalrymple B.P."/>
            <person name="de Bono B."/>
            <person name="Della Gatta G."/>
            <person name="di Bernardo D."/>
            <person name="Down T."/>
            <person name="Engstrom P."/>
            <person name="Fagiolini M."/>
            <person name="Faulkner G."/>
            <person name="Fletcher C.F."/>
            <person name="Fukushima T."/>
            <person name="Furuno M."/>
            <person name="Futaki S."/>
            <person name="Gariboldi M."/>
            <person name="Georgii-Hemming P."/>
            <person name="Gingeras T.R."/>
            <person name="Gojobori T."/>
            <person name="Green R.E."/>
            <person name="Gustincich S."/>
            <person name="Harbers M."/>
            <person name="Hayashi Y."/>
            <person name="Hensch T.K."/>
            <person name="Hirokawa N."/>
            <person name="Hill D."/>
            <person name="Huminiecki L."/>
            <person name="Iacono M."/>
            <person name="Ikeo K."/>
            <person name="Iwama A."/>
            <person name="Ishikawa T."/>
            <person name="Jakt M."/>
            <person name="Kanapin A."/>
            <person name="Katoh M."/>
            <person name="Kawasawa Y."/>
            <person name="Kelso J."/>
            <person name="Kitamura H."/>
            <person name="Kitano H."/>
            <person name="Kollias G."/>
            <person name="Krishnan S.P."/>
            <person name="Kruger A."/>
            <person name="Kummerfeld S.K."/>
            <person name="Kurochkin I.V."/>
            <person name="Lareau L.F."/>
            <person name="Lazarevic D."/>
            <person name="Lipovich L."/>
            <person name="Liu J."/>
            <person name="Liuni S."/>
            <person name="McWilliam S."/>
            <person name="Madan Babu M."/>
            <person name="Madera M."/>
            <person name="Marchionni L."/>
            <person name="Matsuda H."/>
            <person name="Matsuzawa S."/>
            <person name="Miki H."/>
            <person name="Mignone F."/>
            <person name="Miyake S."/>
            <person name="Morris K."/>
            <person name="Mottagui-Tabar S."/>
            <person name="Mulder N."/>
            <person name="Nakano N."/>
            <person name="Nakauchi H."/>
            <person name="Ng P."/>
            <person name="Nilsson R."/>
            <person name="Nishiguchi S."/>
            <person name="Nishikawa S."/>
            <person name="Nori F."/>
            <person name="Ohara O."/>
            <person name="Okazaki Y."/>
            <person name="Orlando V."/>
            <person name="Pang K.C."/>
            <person name="Pavan W.J."/>
            <person name="Pavesi G."/>
            <person name="Pesole G."/>
            <person name="Petrovsky N."/>
            <person name="Piazza S."/>
            <person name="Reed J."/>
            <person name="Reid J.F."/>
            <person name="Ring B.Z."/>
            <person name="Ringwald M."/>
            <person name="Rost B."/>
            <person name="Ruan Y."/>
            <person name="Salzberg S.L."/>
            <person name="Sandelin A."/>
            <person name="Schneider C."/>
            <person name="Schoenbach C."/>
            <person name="Sekiguchi K."/>
            <person name="Semple C.A."/>
            <person name="Seno S."/>
            <person name="Sessa L."/>
            <person name="Sheng Y."/>
            <person name="Shibata Y."/>
            <person name="Shimada H."/>
            <person name="Shimada K."/>
            <person name="Silva D."/>
            <person name="Sinclair B."/>
            <person name="Sperling S."/>
            <person name="Stupka E."/>
            <person name="Sugiura K."/>
            <person name="Sultana R."/>
            <person name="Takenaka Y."/>
            <person name="Taki K."/>
            <person name="Tammoja K."/>
            <person name="Tan S.L."/>
            <person name="Tang S."/>
            <person name="Taylor M.S."/>
            <person name="Tegner J."/>
            <person name="Teichmann S.A."/>
            <person name="Ueda H.R."/>
            <person name="van Nimwegen E."/>
            <person name="Verardo R."/>
            <person name="Wei C.L."/>
            <person name="Yagi K."/>
            <person name="Yamanishi H."/>
            <person name="Zabarovsky E."/>
            <person name="Zhu S."/>
            <person name="Zimmer A."/>
            <person name="Hide W."/>
            <person name="Bult C."/>
            <person name="Grimmond S.M."/>
            <person name="Teasdale R.D."/>
            <person name="Liu E.T."/>
            <person name="Brusic V."/>
            <person name="Quackenbush J."/>
            <person name="Wahlestedt C."/>
            <person name="Mattick J.S."/>
            <person name="Hume D.A."/>
            <person name="Kai C."/>
            <person name="Sasaki D."/>
            <person name="Tomaru Y."/>
            <person name="Fukuda S."/>
            <person name="Kanamori-Katayama M."/>
            <person name="Suzuki M."/>
            <person name="Aoki J."/>
            <person name="Arakawa T."/>
            <person name="Iida J."/>
            <person name="Imamura K."/>
            <person name="Itoh M."/>
            <person name="Kato T."/>
            <person name="Kawaji H."/>
            <person name="Kawagashira N."/>
            <person name="Kawashima T."/>
            <person name="Kojima M."/>
            <person name="Kondo S."/>
            <person name="Konno H."/>
            <person name="Nakano K."/>
            <person name="Ninomiya N."/>
            <person name="Nishio T."/>
            <person name="Okada M."/>
            <person name="Plessy C."/>
            <person name="Shibata K."/>
            <person name="Shiraki T."/>
            <person name="Suzuki S."/>
            <person name="Tagami M."/>
            <person name="Waki K."/>
            <person name="Watahiki A."/>
            <person name="Okamura-Oho Y."/>
            <person name="Suzuki H."/>
            <person name="Kawai J."/>
            <person name="Hayashizaki Y."/>
        </authorList>
    </citation>
    <scope>NUCLEOTIDE SEQUENCE [LARGE SCALE MRNA] (ISOFORM 1)</scope>
    <source>
        <strain>C57BL/6J</strain>
    </source>
</reference>
<reference key="3">
    <citation type="journal article" date="2004" name="Genome Res.">
        <title>The status, quality, and expansion of the NIH full-length cDNA project: the Mammalian Gene Collection (MGC).</title>
        <authorList>
            <consortium name="The MGC Project Team"/>
        </authorList>
    </citation>
    <scope>NUCLEOTIDE SEQUENCE [LARGE SCALE MRNA] (ISOFORM 1)</scope>
    <source>
        <strain>FVB/N</strain>
        <tissue>Mammary gland</tissue>
    </source>
</reference>
<reference key="4">
    <citation type="journal article" date="2003" name="Mol. Cell. Biol.">
        <title>Identification of Jade1, a gene encoding a PHD zinc finger protein, in a gene trap mutagenesis screen for genes involved in anteroposterior axis development.</title>
        <authorList>
            <person name="Tzouanacou E."/>
            <person name="Tweedie S."/>
            <person name="Wilson V."/>
        </authorList>
    </citation>
    <scope>IDENTIFICATION</scope>
    <scope>ALTERNATIVE SPLICING</scope>
    <scope>DEVELOPMENTAL STAGE</scope>
    <scope>SUBCELLULAR LOCATION</scope>
    <scope>DISRUPTION PHENOTYPE</scope>
    <source>
        <strain>C57BL/6J</strain>
    </source>
</reference>
<reference key="5">
    <citation type="journal article" date="2002" name="J. Biol. Chem.">
        <title>The von Hippel-Lindau tumor suppressor stabilizes novel plant homeodomain protein Jade-1.</title>
        <authorList>
            <person name="Zhou M.I."/>
            <person name="Wang H."/>
            <person name="Ross J.J."/>
            <person name="Kuzmin I."/>
            <person name="Xu C."/>
            <person name="Cohen H.T."/>
        </authorList>
    </citation>
    <scope>TISSUE SPECIFICITY</scope>
</reference>
<reference key="6">
    <citation type="journal article" date="2013" name="Mol. Cell">
        <title>SIRT5-mediated lysine desuccinylation impacts diverse metabolic pathways.</title>
        <authorList>
            <person name="Park J."/>
            <person name="Chen Y."/>
            <person name="Tishkoff D.X."/>
            <person name="Peng C."/>
            <person name="Tan M."/>
            <person name="Dai L."/>
            <person name="Xie Z."/>
            <person name="Zhang Y."/>
            <person name="Zwaans B.M."/>
            <person name="Skinner M.E."/>
            <person name="Lombard D.B."/>
            <person name="Zhao Y."/>
        </authorList>
    </citation>
    <scope>ACETYLATION [LARGE SCALE ANALYSIS] AT LYS-609</scope>
    <scope>IDENTIFICATION BY MASS SPECTROMETRY [LARGE SCALE ANALYSIS]</scope>
    <source>
        <tissue>Embryonic fibroblast</tissue>
    </source>
</reference>
<dbReference type="EMBL" id="AK129445">
    <property type="protein sequence ID" value="BAC98255.1"/>
    <property type="status" value="ALT_INIT"/>
    <property type="molecule type" value="mRNA"/>
</dbReference>
<dbReference type="EMBL" id="AK049332">
    <property type="protein sequence ID" value="BAC33688.1"/>
    <property type="molecule type" value="mRNA"/>
</dbReference>
<dbReference type="EMBL" id="AK147466">
    <property type="protein sequence ID" value="BAE27932.1"/>
    <property type="molecule type" value="mRNA"/>
</dbReference>
<dbReference type="EMBL" id="BC020316">
    <property type="protein sequence ID" value="AAH20316.1"/>
    <property type="molecule type" value="mRNA"/>
</dbReference>
<dbReference type="EMBL" id="BC026471">
    <property type="protein sequence ID" value="AAH26471.1"/>
    <property type="status" value="ALT_INIT"/>
    <property type="molecule type" value="mRNA"/>
</dbReference>
<dbReference type="EMBL" id="BN000282">
    <property type="protein sequence ID" value="CAE30497.1"/>
    <property type="molecule type" value="mRNA"/>
</dbReference>
<dbReference type="EMBL" id="BN000281">
    <property type="protein sequence ID" value="CAE30496.1"/>
    <property type="molecule type" value="mRNA"/>
</dbReference>
<dbReference type="CCDS" id="CCDS17331.1">
    <molecule id="Q6ZPI0-1"/>
</dbReference>
<dbReference type="RefSeq" id="NP_001123656.1">
    <molecule id="Q6ZPI0-1"/>
    <property type="nucleotide sequence ID" value="NM_001130184.1"/>
</dbReference>
<dbReference type="RefSeq" id="NP_001123657.1">
    <molecule id="Q6ZPI0-1"/>
    <property type="nucleotide sequence ID" value="NM_001130185.1"/>
</dbReference>
<dbReference type="RefSeq" id="NP_001123658.1">
    <molecule id="Q6ZPI0-1"/>
    <property type="nucleotide sequence ID" value="NM_001130186.1"/>
</dbReference>
<dbReference type="RefSeq" id="NP_758507.3">
    <molecule id="Q6ZPI0-1"/>
    <property type="nucleotide sequence ID" value="NM_172303.4"/>
</dbReference>
<dbReference type="RefSeq" id="XP_030108490.1">
    <molecule id="Q6ZPI0-1"/>
    <property type="nucleotide sequence ID" value="XM_030252630.1"/>
</dbReference>
<dbReference type="RefSeq" id="XP_030108491.1">
    <molecule id="Q6ZPI0-1"/>
    <property type="nucleotide sequence ID" value="XM_030252631.2"/>
</dbReference>
<dbReference type="SMR" id="Q6ZPI0"/>
<dbReference type="BioGRID" id="234652">
    <property type="interactions" value="10"/>
</dbReference>
<dbReference type="ComplexPortal" id="CPX-794">
    <property type="entry name" value="HBO1-4.1 histone acetyltransferase complex"/>
</dbReference>
<dbReference type="ComplexPortal" id="CPX-797">
    <property type="entry name" value="HBO1-5.1 histone acetyltransferase complex"/>
</dbReference>
<dbReference type="FunCoup" id="Q6ZPI0">
    <property type="interactions" value="1830"/>
</dbReference>
<dbReference type="IntAct" id="Q6ZPI0">
    <property type="interactions" value="6"/>
</dbReference>
<dbReference type="STRING" id="10090.ENSMUSP00000128152"/>
<dbReference type="GlyGen" id="Q6ZPI0">
    <property type="glycosylation" value="2 sites, 1 N-linked glycan (1 site)"/>
</dbReference>
<dbReference type="iPTMnet" id="Q6ZPI0"/>
<dbReference type="PhosphoSitePlus" id="Q6ZPI0"/>
<dbReference type="jPOST" id="Q6ZPI0"/>
<dbReference type="PaxDb" id="10090-ENSMUSP00000128152"/>
<dbReference type="PeptideAtlas" id="Q6ZPI0"/>
<dbReference type="ProteomicsDB" id="269356">
    <molecule id="Q6ZPI0-1"/>
</dbReference>
<dbReference type="ProteomicsDB" id="269357">
    <molecule id="Q6ZPI0-2"/>
</dbReference>
<dbReference type="Pumba" id="Q6ZPI0"/>
<dbReference type="Antibodypedia" id="16094">
    <property type="antibodies" value="191 antibodies from 28 providers"/>
</dbReference>
<dbReference type="DNASU" id="269424"/>
<dbReference type="Ensembl" id="ENSMUST00000026865.15">
    <molecule id="Q6ZPI0-1"/>
    <property type="protein sequence ID" value="ENSMUSP00000026865.9"/>
    <property type="gene ID" value="ENSMUSG00000025764.15"/>
</dbReference>
<dbReference type="Ensembl" id="ENSMUST00000163764.8">
    <molecule id="Q6ZPI0-1"/>
    <property type="protein sequence ID" value="ENSMUSP00000128152.2"/>
    <property type="gene ID" value="ENSMUSG00000025764.15"/>
</dbReference>
<dbReference type="Ensembl" id="ENSMUST00000168086.7">
    <molecule id="Q6ZPI0-1"/>
    <property type="protein sequence ID" value="ENSMUSP00000131441.2"/>
    <property type="gene ID" value="ENSMUSG00000025764.15"/>
</dbReference>
<dbReference type="Ensembl" id="ENSMUST00000170711.8">
    <molecule id="Q6ZPI0-1"/>
    <property type="protein sequence ID" value="ENSMUSP00000127113.2"/>
    <property type="gene ID" value="ENSMUSG00000025764.15"/>
</dbReference>
<dbReference type="Ensembl" id="ENSMUST00000191952.2">
    <molecule id="Q6ZPI0-2"/>
    <property type="protein sequence ID" value="ENSMUSP00000141499.2"/>
    <property type="gene ID" value="ENSMUSG00000025764.15"/>
</dbReference>
<dbReference type="GeneID" id="269424"/>
<dbReference type="KEGG" id="mmu:269424"/>
<dbReference type="UCSC" id="uc008pcj.2">
    <molecule id="Q6ZPI0-1"/>
    <property type="organism name" value="mouse"/>
</dbReference>
<dbReference type="AGR" id="MGI:1925835"/>
<dbReference type="CTD" id="79960"/>
<dbReference type="MGI" id="MGI:1925835">
    <property type="gene designation" value="Jade1"/>
</dbReference>
<dbReference type="VEuPathDB" id="HostDB:ENSMUSG00000025764"/>
<dbReference type="eggNOG" id="KOG0954">
    <property type="taxonomic scope" value="Eukaryota"/>
</dbReference>
<dbReference type="GeneTree" id="ENSGT00940000158247"/>
<dbReference type="HOGENOM" id="CLU_016215_0_0_1"/>
<dbReference type="InParanoid" id="Q6ZPI0"/>
<dbReference type="OMA" id="SSTCWSQ"/>
<dbReference type="OrthoDB" id="20839at2759"/>
<dbReference type="PhylomeDB" id="Q6ZPI0"/>
<dbReference type="TreeFam" id="TF316118"/>
<dbReference type="Reactome" id="R-MMU-3214847">
    <property type="pathway name" value="HATs acetylate histones"/>
</dbReference>
<dbReference type="BioGRID-ORCS" id="269424">
    <property type="hits" value="4 hits in 84 CRISPR screens"/>
</dbReference>
<dbReference type="ChiTaRS" id="Jade1">
    <property type="organism name" value="mouse"/>
</dbReference>
<dbReference type="PRO" id="PR:Q6ZPI0"/>
<dbReference type="Proteomes" id="UP000000589">
    <property type="component" value="Chromosome 3"/>
</dbReference>
<dbReference type="RNAct" id="Q6ZPI0">
    <property type="molecule type" value="protein"/>
</dbReference>
<dbReference type="Bgee" id="ENSMUSG00000025764">
    <property type="expression patterns" value="Expressed in lacrimal gland and 243 other cell types or tissues"/>
</dbReference>
<dbReference type="ExpressionAtlas" id="Q6ZPI0">
    <property type="expression patterns" value="baseline and differential"/>
</dbReference>
<dbReference type="GO" id="GO:0005813">
    <property type="term" value="C:centrosome"/>
    <property type="evidence" value="ECO:0007669"/>
    <property type="project" value="Ensembl"/>
</dbReference>
<dbReference type="GO" id="GO:0036064">
    <property type="term" value="C:ciliary basal body"/>
    <property type="evidence" value="ECO:0007669"/>
    <property type="project" value="Ensembl"/>
</dbReference>
<dbReference type="GO" id="GO:0005737">
    <property type="term" value="C:cytoplasm"/>
    <property type="evidence" value="ECO:0007669"/>
    <property type="project" value="UniProtKB-SubCell"/>
</dbReference>
<dbReference type="GO" id="GO:0005829">
    <property type="term" value="C:cytosol"/>
    <property type="evidence" value="ECO:0000314"/>
    <property type="project" value="MGI"/>
</dbReference>
<dbReference type="GO" id="GO:0000123">
    <property type="term" value="C:histone acetyltransferase complex"/>
    <property type="evidence" value="ECO:0000250"/>
    <property type="project" value="UniProtKB"/>
</dbReference>
<dbReference type="GO" id="GO:0016607">
    <property type="term" value="C:nuclear speck"/>
    <property type="evidence" value="ECO:0007669"/>
    <property type="project" value="Ensembl"/>
</dbReference>
<dbReference type="GO" id="GO:0005654">
    <property type="term" value="C:nucleoplasm"/>
    <property type="evidence" value="ECO:0000266"/>
    <property type="project" value="ComplexPortal"/>
</dbReference>
<dbReference type="GO" id="GO:0005634">
    <property type="term" value="C:nucleus"/>
    <property type="evidence" value="ECO:0000314"/>
    <property type="project" value="MGI"/>
</dbReference>
<dbReference type="GO" id="GO:0005886">
    <property type="term" value="C:plasma membrane"/>
    <property type="evidence" value="ECO:0000266"/>
    <property type="project" value="MGI"/>
</dbReference>
<dbReference type="GO" id="GO:0036408">
    <property type="term" value="F:histone H3K14 acetyltransferase activity"/>
    <property type="evidence" value="ECO:0007669"/>
    <property type="project" value="Ensembl"/>
</dbReference>
<dbReference type="GO" id="GO:0043997">
    <property type="term" value="F:histone H4K12 acetyltransferase activity"/>
    <property type="evidence" value="ECO:0007669"/>
    <property type="project" value="Ensembl"/>
</dbReference>
<dbReference type="GO" id="GO:0043995">
    <property type="term" value="F:histone H4K5 acetyltransferase activity"/>
    <property type="evidence" value="ECO:0007669"/>
    <property type="project" value="Ensembl"/>
</dbReference>
<dbReference type="GO" id="GO:0043996">
    <property type="term" value="F:histone H4K8 acetyltransferase activity"/>
    <property type="evidence" value="ECO:0007669"/>
    <property type="project" value="Ensembl"/>
</dbReference>
<dbReference type="GO" id="GO:0003713">
    <property type="term" value="F:transcription coactivator activity"/>
    <property type="evidence" value="ECO:0000266"/>
    <property type="project" value="MGI"/>
</dbReference>
<dbReference type="GO" id="GO:0008270">
    <property type="term" value="F:zinc ion binding"/>
    <property type="evidence" value="ECO:0007669"/>
    <property type="project" value="UniProtKB-KW"/>
</dbReference>
<dbReference type="GO" id="GO:0006915">
    <property type="term" value="P:apoptotic process"/>
    <property type="evidence" value="ECO:0007669"/>
    <property type="project" value="UniProtKB-KW"/>
</dbReference>
<dbReference type="GO" id="GO:0090090">
    <property type="term" value="P:negative regulation of canonical Wnt signaling pathway"/>
    <property type="evidence" value="ECO:0007669"/>
    <property type="project" value="Ensembl"/>
</dbReference>
<dbReference type="GO" id="GO:2000134">
    <property type="term" value="P:negative regulation of G1/S transition of mitotic cell cycle"/>
    <property type="evidence" value="ECO:0000266"/>
    <property type="project" value="MGI"/>
</dbReference>
<dbReference type="GO" id="GO:0051726">
    <property type="term" value="P:regulation of cell cycle"/>
    <property type="evidence" value="ECO:0000266"/>
    <property type="project" value="ComplexPortal"/>
</dbReference>
<dbReference type="GO" id="GO:0001558">
    <property type="term" value="P:regulation of cell growth"/>
    <property type="evidence" value="ECO:0000266"/>
    <property type="project" value="ComplexPortal"/>
</dbReference>
<dbReference type="GO" id="GO:2000278">
    <property type="term" value="P:regulation of DNA biosynthetic process"/>
    <property type="evidence" value="ECO:0000266"/>
    <property type="project" value="ComplexPortal"/>
</dbReference>
<dbReference type="GO" id="GO:0006275">
    <property type="term" value="P:regulation of DNA replication"/>
    <property type="evidence" value="ECO:0000266"/>
    <property type="project" value="ComplexPortal"/>
</dbReference>
<dbReference type="GO" id="GO:0006355">
    <property type="term" value="P:regulation of DNA-templated transcription"/>
    <property type="evidence" value="ECO:0000266"/>
    <property type="project" value="ComplexPortal"/>
</dbReference>
<dbReference type="CDD" id="cd15671">
    <property type="entry name" value="ePHD_JADE"/>
    <property type="match status" value="1"/>
</dbReference>
<dbReference type="CDD" id="cd15679">
    <property type="entry name" value="PHD_JADE1"/>
    <property type="match status" value="1"/>
</dbReference>
<dbReference type="FunFam" id="3.30.40.10:FF:000004">
    <property type="entry name" value="Jade family PHD finger 2"/>
    <property type="match status" value="1"/>
</dbReference>
<dbReference type="FunFam" id="3.30.40.10:FF:000030">
    <property type="entry name" value="Protein Jade-1 isoform 1"/>
    <property type="match status" value="1"/>
</dbReference>
<dbReference type="Gene3D" id="3.30.40.10">
    <property type="entry name" value="Zinc/RING finger domain, C3HC4 (zinc finger)"/>
    <property type="match status" value="2"/>
</dbReference>
<dbReference type="InterPro" id="IPR019542">
    <property type="entry name" value="Enhancer_polycomb-like_N"/>
</dbReference>
<dbReference type="InterPro" id="IPR034732">
    <property type="entry name" value="EPHD"/>
</dbReference>
<dbReference type="InterPro" id="IPR050701">
    <property type="entry name" value="Histone_Mod_Regulator"/>
</dbReference>
<dbReference type="InterPro" id="IPR039546">
    <property type="entry name" value="Jade-1_PHD"/>
</dbReference>
<dbReference type="InterPro" id="IPR019786">
    <property type="entry name" value="Zinc_finger_PHD-type_CS"/>
</dbReference>
<dbReference type="InterPro" id="IPR011011">
    <property type="entry name" value="Znf_FYVE_PHD"/>
</dbReference>
<dbReference type="InterPro" id="IPR001965">
    <property type="entry name" value="Znf_PHD"/>
</dbReference>
<dbReference type="InterPro" id="IPR019787">
    <property type="entry name" value="Znf_PHD-finger"/>
</dbReference>
<dbReference type="InterPro" id="IPR013083">
    <property type="entry name" value="Znf_RING/FYVE/PHD"/>
</dbReference>
<dbReference type="PANTHER" id="PTHR13793">
    <property type="entry name" value="PHD FINGER PROTEINS"/>
    <property type="match status" value="1"/>
</dbReference>
<dbReference type="PANTHER" id="PTHR13793:SF79">
    <property type="entry name" value="PROTEIN JADE-1"/>
    <property type="match status" value="1"/>
</dbReference>
<dbReference type="Pfam" id="PF10513">
    <property type="entry name" value="EPL1"/>
    <property type="match status" value="1"/>
</dbReference>
<dbReference type="Pfam" id="PF13831">
    <property type="entry name" value="PHD_2"/>
    <property type="match status" value="1"/>
</dbReference>
<dbReference type="Pfam" id="PF13832">
    <property type="entry name" value="zf-HC5HC2H_2"/>
    <property type="match status" value="1"/>
</dbReference>
<dbReference type="SMART" id="SM00249">
    <property type="entry name" value="PHD"/>
    <property type="match status" value="2"/>
</dbReference>
<dbReference type="SUPFAM" id="SSF57903">
    <property type="entry name" value="FYVE/PHD zinc finger"/>
    <property type="match status" value="1"/>
</dbReference>
<dbReference type="PROSITE" id="PS51805">
    <property type="entry name" value="EPHD"/>
    <property type="match status" value="1"/>
</dbReference>
<dbReference type="PROSITE" id="PS01359">
    <property type="entry name" value="ZF_PHD_1"/>
    <property type="match status" value="1"/>
</dbReference>
<dbReference type="PROSITE" id="PS50016">
    <property type="entry name" value="ZF_PHD_2"/>
    <property type="match status" value="1"/>
</dbReference>
<keyword id="KW-0007">Acetylation</keyword>
<keyword id="KW-0010">Activator</keyword>
<keyword id="KW-0025">Alternative splicing</keyword>
<keyword id="KW-0053">Apoptosis</keyword>
<keyword id="KW-0966">Cell projection</keyword>
<keyword id="KW-0158">Chromosome</keyword>
<keyword id="KW-0963">Cytoplasm</keyword>
<keyword id="KW-0206">Cytoskeleton</keyword>
<keyword id="KW-1017">Isopeptide bond</keyword>
<keyword id="KW-0479">Metal-binding</keyword>
<keyword id="KW-0539">Nucleus</keyword>
<keyword id="KW-0597">Phosphoprotein</keyword>
<keyword id="KW-1185">Reference proteome</keyword>
<keyword id="KW-0677">Repeat</keyword>
<keyword id="KW-0804">Transcription</keyword>
<keyword id="KW-0805">Transcription regulation</keyword>
<keyword id="KW-0832">Ubl conjugation</keyword>
<keyword id="KW-0862">Zinc</keyword>
<keyword id="KW-0863">Zinc-finger</keyword>
<comment type="function">
    <text evidence="2">Scaffold subunit of some HBO1 complexes, which have a histone H4 acetyltransferase activity. Plays a key role in HBO1 complex by directing KAT7/HBO1 specificity towards histone H4 acetylation (H4K5ac, H4K8ac and H4K12ac), regulating DNA replication initiation, regulating DNA replication initiation. May also promote acetylation of nucleosomal histone H4 by KAT5. Promotes apoptosis. May act as a renal tumor suppressor. Negatively regulates canonical Wnt signaling; at least in part, cooperates with NPHP4 in this function.</text>
</comment>
<comment type="subunit">
    <text evidence="2">Component of the HBO1 complex composed at least of ING4 or ING5, KAT7/HBO1, MEAF6, and one of JADE1, JADE2 and JADE3. Interacts with NPHP4.</text>
</comment>
<comment type="subcellular location">
    <subcellularLocation>
        <location evidence="2">Nucleus</location>
    </subcellularLocation>
    <subcellularLocation>
        <location evidence="2">Chromosome</location>
    </subcellularLocation>
    <subcellularLocation>
        <location evidence="2">Cytoplasm</location>
    </subcellularLocation>
    <subcellularLocation>
        <location evidence="2">Cytoplasm</location>
        <location evidence="2">Cytoskeleton</location>
        <location evidence="2">Cilium basal body</location>
    </subcellularLocation>
    <text evidence="2">Localizes to the ciliary transition zone.</text>
</comment>
<comment type="alternative products">
    <event type="alternative splicing"/>
    <isoform>
        <id>Q6ZPI0-1</id>
        <name>1</name>
        <name>Jade1L</name>
        <sequence type="displayed"/>
    </isoform>
    <isoform>
        <id>Q6ZPI0-2</id>
        <name>2</name>
        <name>Jade1S</name>
        <sequence type="described" ref="VSP_021048 VSP_021049"/>
    </isoform>
</comment>
<comment type="tissue specificity">
    <text evidence="6">Highly expressed in kidney. Also present in liver (at protein level).</text>
</comment>
<comment type="developmental stage">
    <text evidence="7">Expressed from 6.5 dpc. From 12.5 to 15.5 dpc, expressed in the nervous system and developing muscles.</text>
</comment>
<comment type="domain">
    <text evidence="1">The 2 PHD-type zinc fingers are required for transcriptional activity.</text>
</comment>
<comment type="disruption phenotype">
    <text evidence="7">Mice are viable and fertile, and show no visible phenotype.</text>
</comment>
<comment type="similarity">
    <text evidence="8">Belongs to the JADE family.</text>
</comment>
<comment type="sequence caution" evidence="8">
    <conflict type="erroneous initiation">
        <sequence resource="EMBL-CDS" id="AAH26471"/>
    </conflict>
</comment>
<comment type="sequence caution" evidence="8">
    <conflict type="erroneous initiation">
        <sequence resource="EMBL-CDS" id="BAC98255"/>
    </conflict>
</comment>
<protein>
    <recommendedName>
        <fullName>Protein Jade-1</fullName>
    </recommendedName>
    <alternativeName>
        <fullName>Jade family PHD finger protein 1</fullName>
    </alternativeName>
    <alternativeName>
        <fullName>PHD finger protein 17</fullName>
    </alternativeName>
</protein>
<feature type="chain" id="PRO_0000253530" description="Protein Jade-1">
    <location>
        <begin position="1"/>
        <end position="834"/>
    </location>
</feature>
<feature type="zinc finger region" description="PHD-type 1" evidence="3">
    <location>
        <begin position="204"/>
        <end position="254"/>
    </location>
</feature>
<feature type="zinc finger region" description="C2HC pre-PHD-type" evidence="4">
    <location>
        <begin position="256"/>
        <end position="290"/>
    </location>
</feature>
<feature type="zinc finger region" description="PHD-type 2" evidence="4">
    <location>
        <begin position="314"/>
        <end position="370"/>
    </location>
</feature>
<feature type="region of interest" description="Disordered" evidence="5">
    <location>
        <begin position="1"/>
        <end position="46"/>
    </location>
</feature>
<feature type="region of interest" description="Interaction with KAT7/HBO1 and histones" evidence="2">
    <location>
        <begin position="61"/>
        <end position="81"/>
    </location>
</feature>
<feature type="region of interest" description="Interaction with histones" evidence="2">
    <location>
        <begin position="81"/>
        <end position="189"/>
    </location>
</feature>
<feature type="region of interest" description="Disordered" evidence="5">
    <location>
        <begin position="367"/>
        <end position="409"/>
    </location>
</feature>
<feature type="region of interest" description="Disordered" evidence="5">
    <location>
        <begin position="589"/>
        <end position="621"/>
    </location>
</feature>
<feature type="region of interest" description="Disordered" evidence="5">
    <location>
        <begin position="676"/>
        <end position="716"/>
    </location>
</feature>
<feature type="region of interest" description="Disordered" evidence="5">
    <location>
        <begin position="738"/>
        <end position="819"/>
    </location>
</feature>
<feature type="compositionally biased region" description="Low complexity" evidence="5">
    <location>
        <begin position="24"/>
        <end position="35"/>
    </location>
</feature>
<feature type="compositionally biased region" description="Basic and acidic residues" evidence="5">
    <location>
        <begin position="747"/>
        <end position="768"/>
    </location>
</feature>
<feature type="compositionally biased region" description="Basic and acidic residues" evidence="5">
    <location>
        <begin position="777"/>
        <end position="790"/>
    </location>
</feature>
<feature type="modified residue" description="Phosphoserine" evidence="2">
    <location>
        <position position="90"/>
    </location>
</feature>
<feature type="modified residue" description="Phosphothreonine" evidence="2">
    <location>
        <position position="93"/>
    </location>
</feature>
<feature type="modified residue" description="Phosphoserine" evidence="2">
    <location>
        <position position="603"/>
    </location>
</feature>
<feature type="modified residue" description="N6-acetyllysine" evidence="9">
    <location>
        <position position="609"/>
    </location>
</feature>
<feature type="modified residue" description="Phosphoserine" evidence="2">
    <location>
        <position position="704"/>
    </location>
</feature>
<feature type="modified residue" description="Phosphoserine" evidence="2">
    <location>
        <position position="735"/>
    </location>
</feature>
<feature type="cross-link" description="Glycyl lysine isopeptide (Lys-Gly) (interchain with G-Cter in SUMO2)" evidence="2">
    <location>
        <position position="115"/>
    </location>
</feature>
<feature type="cross-link" description="Glycyl lysine isopeptide (Lys-Gly) (interchain with G-Cter in SUMO2)" evidence="2">
    <location>
        <position position="573"/>
    </location>
</feature>
<feature type="splice variant" id="VSP_021048" description="In isoform 2." evidence="8">
    <original>RNLTYMV</original>
    <variation>MIDTDTL</variation>
    <location>
        <begin position="504"/>
        <end position="510"/>
    </location>
</feature>
<feature type="splice variant" id="VSP_021049" description="In isoform 2." evidence="8">
    <location>
        <begin position="511"/>
        <end position="834"/>
    </location>
</feature>
<feature type="sequence conflict" description="In Ref. 2; BAC33688." evidence="8" ref="2">
    <original>A</original>
    <variation>D</variation>
    <location>
        <position position="190"/>
    </location>
</feature>
<evidence type="ECO:0000250" key="1"/>
<evidence type="ECO:0000250" key="2">
    <source>
        <dbReference type="UniProtKB" id="Q6IE81"/>
    </source>
</evidence>
<evidence type="ECO:0000255" key="3">
    <source>
        <dbReference type="PROSITE-ProRule" id="PRU00146"/>
    </source>
</evidence>
<evidence type="ECO:0000255" key="4">
    <source>
        <dbReference type="PROSITE-ProRule" id="PRU01146"/>
    </source>
</evidence>
<evidence type="ECO:0000256" key="5">
    <source>
        <dbReference type="SAM" id="MobiDB-lite"/>
    </source>
</evidence>
<evidence type="ECO:0000269" key="6">
    <source>
    </source>
</evidence>
<evidence type="ECO:0000269" key="7">
    <source>
    </source>
</evidence>
<evidence type="ECO:0000305" key="8"/>
<evidence type="ECO:0007744" key="9">
    <source>
    </source>
</evidence>
<accession>Q6ZPI0</accession>
<accession>Q6IE84</accession>
<accession>Q8C7S6</accession>
<accession>Q8CFM2</accession>
<accession>Q8R362</accession>
<proteinExistence type="evidence at protein level"/>
<name>JADE1_MOUSE</name>
<sequence>MKRGRLPSSSEDSDDNGSLSTTWSQHSRSQHGRSSTCSRPEDRKPSEVFRTDLITAMKLHDSYQLNPDDYYVLADPWRQEWEKGVQVPVSPGTIPQPVARVVSEEKSLMFIRPKKYIASSGSEPPALGYVDIRTLADSVCRYDLNDMDAAWLEVTNEEFKEMGMPELDEYTMERVLEEFEQRCYDNMNHAIETEEGLGIEYDEDVVCDVCQSPDGEDGNEMVFCDKCNICVHQACYGILKVPEGSWLCRTCALGVQPKCLLCPKKGGAMKPTRSGTKWVHVSCALWIPEVSIGSPEKMEPITKVSHIPSSRWALVCSLCNEKFGASIQCSVKNCRTAFHVTCAFDRGLEMKTILAENDEVKFKSYCPKHSSHRKPEEGLGEGAAQENGAPESSPQSPLEPYGSLEPNREEAHRVSVRKQKLQQLEDEFYTFVNLLDVARALRLPEEVVDFLYQYWKLKRKINFNKPLITPKKDEEDNLAKREQDVLFRRLQLFTHLRQDLERVRNLTYMVTRREKIKRSVCKVQEQIFTQYTKLLEQEKVSGVPSSCSSALENMLFFNSPSVGPNAPKIEDLKWHSAFFRKQMGTSLVHPLKKSHKRDAVQNSSGTEGKTSHKQPGLCGRREGLEVSESLLSLEKTFAEARLLSSAQQKNGVVTPDHGKRRDNRFHCDLVKGDLKDKSFKQSHKPLRSTDTSQRHLDNTRAATSPGVGQSAPGTRKEIVPKCNGSLVKVPITPASPVKSWGGFRIPKKGERQQQGEAHDGACHQHSDCSHLGVSRAPAKERAKSRLRADSENDGYAPDGEMSDSESEASEKKCIHASSTISRRTDIIRRSILAS</sequence>
<organism>
    <name type="scientific">Mus musculus</name>
    <name type="common">Mouse</name>
    <dbReference type="NCBI Taxonomy" id="10090"/>
    <lineage>
        <taxon>Eukaryota</taxon>
        <taxon>Metazoa</taxon>
        <taxon>Chordata</taxon>
        <taxon>Craniata</taxon>
        <taxon>Vertebrata</taxon>
        <taxon>Euteleostomi</taxon>
        <taxon>Mammalia</taxon>
        <taxon>Eutheria</taxon>
        <taxon>Euarchontoglires</taxon>
        <taxon>Glires</taxon>
        <taxon>Rodentia</taxon>
        <taxon>Myomorpha</taxon>
        <taxon>Muroidea</taxon>
        <taxon>Muridae</taxon>
        <taxon>Murinae</taxon>
        <taxon>Mus</taxon>
        <taxon>Mus</taxon>
    </lineage>
</organism>
<gene>
    <name type="primary">Jade1</name>
    <name type="synonym">Kiaa1807</name>
    <name type="synonym">Phf17</name>
</gene>